<sequence length="335" mass="36847">MKSTSKIYTDKDSNLDVIKGKRIAVLGYGSQGRAWAQNLRDSGLNVVVGLEREGKSWELAKSDGIIPLHTKDAVKDADIIIFLVPDMVQRTLWLESVQPYMKKGADLVFAHGFNIHYKLIEPPKDSDVYMIAPKGPGPTVREYYKAGGGVPALVAIQQDVSGTALQKALAIAKGIGATRAGVIPTTFKEETETDLFGEQVILVGGIMELMKAAFETLVEEGYQPEVAYFETINELKMLVDLVYEKGITGMLKAVSDTAKYGGMTVGKFVINEDVRKRMKEALQRIKSGKFAEEWVEEYGRGMPTVVNGLSQVQNSLEEKIGNQLKDLIQKGKPKS</sequence>
<gene>
    <name evidence="1" type="primary">ilvC</name>
    <name type="ordered locus">M164_1552</name>
</gene>
<accession>C4KHT9</accession>
<feature type="chain" id="PRO_1000206089" description="Ketol-acid reductoisomerase (NADP(+))">
    <location>
        <begin position="1"/>
        <end position="335"/>
    </location>
</feature>
<feature type="domain" description="KARI N-terminal Rossmann" evidence="2">
    <location>
        <begin position="5"/>
        <end position="185"/>
    </location>
</feature>
<feature type="domain" description="KARI C-terminal knotted" evidence="3">
    <location>
        <begin position="186"/>
        <end position="331"/>
    </location>
</feature>
<feature type="active site" evidence="1">
    <location>
        <position position="111"/>
    </location>
</feature>
<feature type="binding site" evidence="1">
    <location>
        <begin position="28"/>
        <end position="31"/>
    </location>
    <ligand>
        <name>NADP(+)</name>
        <dbReference type="ChEBI" id="CHEBI:58349"/>
    </ligand>
</feature>
<feature type="binding site" evidence="1">
    <location>
        <position position="56"/>
    </location>
    <ligand>
        <name>NADP(+)</name>
        <dbReference type="ChEBI" id="CHEBI:58349"/>
    </ligand>
</feature>
<feature type="binding site" evidence="1">
    <location>
        <begin position="86"/>
        <end position="89"/>
    </location>
    <ligand>
        <name>NADP(+)</name>
        <dbReference type="ChEBI" id="CHEBI:58349"/>
    </ligand>
</feature>
<feature type="binding site" evidence="1">
    <location>
        <position position="137"/>
    </location>
    <ligand>
        <name>NADP(+)</name>
        <dbReference type="ChEBI" id="CHEBI:58349"/>
    </ligand>
</feature>
<feature type="binding site" evidence="1">
    <location>
        <position position="194"/>
    </location>
    <ligand>
        <name>Mg(2+)</name>
        <dbReference type="ChEBI" id="CHEBI:18420"/>
        <label>1</label>
    </ligand>
</feature>
<feature type="binding site" evidence="1">
    <location>
        <position position="194"/>
    </location>
    <ligand>
        <name>Mg(2+)</name>
        <dbReference type="ChEBI" id="CHEBI:18420"/>
        <label>2</label>
    </ligand>
</feature>
<feature type="binding site" evidence="1">
    <location>
        <position position="198"/>
    </location>
    <ligand>
        <name>Mg(2+)</name>
        <dbReference type="ChEBI" id="CHEBI:18420"/>
        <label>1</label>
    </ligand>
</feature>
<feature type="binding site" evidence="1">
    <location>
        <position position="230"/>
    </location>
    <ligand>
        <name>Mg(2+)</name>
        <dbReference type="ChEBI" id="CHEBI:18420"/>
        <label>2</label>
    </ligand>
</feature>
<feature type="binding site" evidence="1">
    <location>
        <position position="234"/>
    </location>
    <ligand>
        <name>Mg(2+)</name>
        <dbReference type="ChEBI" id="CHEBI:18420"/>
        <label>2</label>
    </ligand>
</feature>
<feature type="binding site" evidence="1">
    <location>
        <position position="255"/>
    </location>
    <ligand>
        <name>substrate</name>
    </ligand>
</feature>
<dbReference type="EC" id="1.1.1.86" evidence="1"/>
<dbReference type="EMBL" id="CP001402">
    <property type="protein sequence ID" value="ACR42153.1"/>
    <property type="molecule type" value="Genomic_DNA"/>
</dbReference>
<dbReference type="RefSeq" id="WP_012711549.1">
    <property type="nucleotide sequence ID" value="NC_012726.1"/>
</dbReference>
<dbReference type="SMR" id="C4KHT9"/>
<dbReference type="GeneID" id="84061866"/>
<dbReference type="KEGG" id="sid:M164_1552"/>
<dbReference type="HOGENOM" id="CLU_033821_0_1_2"/>
<dbReference type="UniPathway" id="UPA00047">
    <property type="reaction ID" value="UER00056"/>
</dbReference>
<dbReference type="UniPathway" id="UPA00049">
    <property type="reaction ID" value="UER00060"/>
</dbReference>
<dbReference type="Proteomes" id="UP000001479">
    <property type="component" value="Chromosome"/>
</dbReference>
<dbReference type="GO" id="GO:0004455">
    <property type="term" value="F:ketol-acid reductoisomerase activity"/>
    <property type="evidence" value="ECO:0007669"/>
    <property type="project" value="UniProtKB-UniRule"/>
</dbReference>
<dbReference type="GO" id="GO:0000287">
    <property type="term" value="F:magnesium ion binding"/>
    <property type="evidence" value="ECO:0007669"/>
    <property type="project" value="UniProtKB-UniRule"/>
</dbReference>
<dbReference type="GO" id="GO:0050661">
    <property type="term" value="F:NADP binding"/>
    <property type="evidence" value="ECO:0007669"/>
    <property type="project" value="InterPro"/>
</dbReference>
<dbReference type="GO" id="GO:0009097">
    <property type="term" value="P:isoleucine biosynthetic process"/>
    <property type="evidence" value="ECO:0007669"/>
    <property type="project" value="UniProtKB-UniRule"/>
</dbReference>
<dbReference type="GO" id="GO:0009099">
    <property type="term" value="P:L-valine biosynthetic process"/>
    <property type="evidence" value="ECO:0007669"/>
    <property type="project" value="UniProtKB-UniRule"/>
</dbReference>
<dbReference type="FunFam" id="3.40.50.720:FF:000023">
    <property type="entry name" value="Ketol-acid reductoisomerase (NADP(+))"/>
    <property type="match status" value="1"/>
</dbReference>
<dbReference type="Gene3D" id="6.10.240.10">
    <property type="match status" value="1"/>
</dbReference>
<dbReference type="Gene3D" id="3.40.50.720">
    <property type="entry name" value="NAD(P)-binding Rossmann-like Domain"/>
    <property type="match status" value="1"/>
</dbReference>
<dbReference type="HAMAP" id="MF_00435">
    <property type="entry name" value="IlvC"/>
    <property type="match status" value="1"/>
</dbReference>
<dbReference type="InterPro" id="IPR008927">
    <property type="entry name" value="6-PGluconate_DH-like_C_sf"/>
</dbReference>
<dbReference type="InterPro" id="IPR013023">
    <property type="entry name" value="KARI"/>
</dbReference>
<dbReference type="InterPro" id="IPR000506">
    <property type="entry name" value="KARI_C"/>
</dbReference>
<dbReference type="InterPro" id="IPR013116">
    <property type="entry name" value="KARI_N"/>
</dbReference>
<dbReference type="InterPro" id="IPR014359">
    <property type="entry name" value="KARI_prok"/>
</dbReference>
<dbReference type="InterPro" id="IPR036291">
    <property type="entry name" value="NAD(P)-bd_dom_sf"/>
</dbReference>
<dbReference type="NCBIfam" id="TIGR00465">
    <property type="entry name" value="ilvC"/>
    <property type="match status" value="1"/>
</dbReference>
<dbReference type="NCBIfam" id="NF004017">
    <property type="entry name" value="PRK05479.1"/>
    <property type="match status" value="1"/>
</dbReference>
<dbReference type="PANTHER" id="PTHR21371">
    <property type="entry name" value="KETOL-ACID REDUCTOISOMERASE, MITOCHONDRIAL"/>
    <property type="match status" value="1"/>
</dbReference>
<dbReference type="PANTHER" id="PTHR21371:SF1">
    <property type="entry name" value="KETOL-ACID REDUCTOISOMERASE, MITOCHONDRIAL"/>
    <property type="match status" value="1"/>
</dbReference>
<dbReference type="Pfam" id="PF01450">
    <property type="entry name" value="KARI_C"/>
    <property type="match status" value="1"/>
</dbReference>
<dbReference type="Pfam" id="PF07991">
    <property type="entry name" value="KARI_N"/>
    <property type="match status" value="1"/>
</dbReference>
<dbReference type="PIRSF" id="PIRSF000116">
    <property type="entry name" value="IlvC_gammaproteo"/>
    <property type="match status" value="1"/>
</dbReference>
<dbReference type="SUPFAM" id="SSF48179">
    <property type="entry name" value="6-phosphogluconate dehydrogenase C-terminal domain-like"/>
    <property type="match status" value="1"/>
</dbReference>
<dbReference type="SUPFAM" id="SSF51735">
    <property type="entry name" value="NAD(P)-binding Rossmann-fold domains"/>
    <property type="match status" value="1"/>
</dbReference>
<dbReference type="PROSITE" id="PS51851">
    <property type="entry name" value="KARI_C"/>
    <property type="match status" value="1"/>
</dbReference>
<dbReference type="PROSITE" id="PS51850">
    <property type="entry name" value="KARI_N"/>
    <property type="match status" value="1"/>
</dbReference>
<keyword id="KW-0028">Amino-acid biosynthesis</keyword>
<keyword id="KW-0100">Branched-chain amino acid biosynthesis</keyword>
<keyword id="KW-0460">Magnesium</keyword>
<keyword id="KW-0479">Metal-binding</keyword>
<keyword id="KW-0521">NADP</keyword>
<keyword id="KW-0560">Oxidoreductase</keyword>
<evidence type="ECO:0000255" key="1">
    <source>
        <dbReference type="HAMAP-Rule" id="MF_00435"/>
    </source>
</evidence>
<evidence type="ECO:0000255" key="2">
    <source>
        <dbReference type="PROSITE-ProRule" id="PRU01197"/>
    </source>
</evidence>
<evidence type="ECO:0000255" key="3">
    <source>
        <dbReference type="PROSITE-ProRule" id="PRU01198"/>
    </source>
</evidence>
<organism>
    <name type="scientific">Saccharolobus islandicus (strain M.16.4 / Kamchatka #3)</name>
    <name type="common">Sulfolobus islandicus</name>
    <dbReference type="NCBI Taxonomy" id="426118"/>
    <lineage>
        <taxon>Archaea</taxon>
        <taxon>Thermoproteota</taxon>
        <taxon>Thermoprotei</taxon>
        <taxon>Sulfolobales</taxon>
        <taxon>Sulfolobaceae</taxon>
        <taxon>Saccharolobus</taxon>
    </lineage>
</organism>
<reference key="1">
    <citation type="journal article" date="2009" name="Proc. Natl. Acad. Sci. U.S.A.">
        <title>Biogeography of the Sulfolobus islandicus pan-genome.</title>
        <authorList>
            <person name="Reno M.L."/>
            <person name="Held N.L."/>
            <person name="Fields C.J."/>
            <person name="Burke P.V."/>
            <person name="Whitaker R.J."/>
        </authorList>
    </citation>
    <scope>NUCLEOTIDE SEQUENCE [LARGE SCALE GENOMIC DNA]</scope>
    <source>
        <strain>M.16.4 / Kamchatka #3</strain>
    </source>
</reference>
<protein>
    <recommendedName>
        <fullName evidence="1">Ketol-acid reductoisomerase (NADP(+))</fullName>
        <shortName evidence="1">KARI</shortName>
        <ecNumber evidence="1">1.1.1.86</ecNumber>
    </recommendedName>
    <alternativeName>
        <fullName evidence="1">Acetohydroxy-acid isomeroreductase</fullName>
        <shortName evidence="1">AHIR</shortName>
    </alternativeName>
    <alternativeName>
        <fullName evidence="1">Alpha-keto-beta-hydroxylacyl reductoisomerase</fullName>
    </alternativeName>
    <alternativeName>
        <fullName evidence="1">Ketol-acid reductoisomerase type 1</fullName>
    </alternativeName>
    <alternativeName>
        <fullName evidence="1">Ketol-acid reductoisomerase type I</fullName>
    </alternativeName>
</protein>
<comment type="function">
    <text evidence="1">Involved in the biosynthesis of branched-chain amino acids (BCAA). Catalyzes an alkyl-migration followed by a ketol-acid reduction of (S)-2-acetolactate (S2AL) to yield (R)-2,3-dihydroxy-isovalerate. In the isomerase reaction, S2AL is rearranged via a Mg-dependent methyl migration to produce 3-hydroxy-3-methyl-2-ketobutyrate (HMKB). In the reductase reaction, this 2-ketoacid undergoes a metal-dependent reduction by NADPH to yield (R)-2,3-dihydroxy-isovalerate.</text>
</comment>
<comment type="catalytic activity">
    <reaction evidence="1">
        <text>(2R)-2,3-dihydroxy-3-methylbutanoate + NADP(+) = (2S)-2-acetolactate + NADPH + H(+)</text>
        <dbReference type="Rhea" id="RHEA:22068"/>
        <dbReference type="ChEBI" id="CHEBI:15378"/>
        <dbReference type="ChEBI" id="CHEBI:49072"/>
        <dbReference type="ChEBI" id="CHEBI:57783"/>
        <dbReference type="ChEBI" id="CHEBI:58349"/>
        <dbReference type="ChEBI" id="CHEBI:58476"/>
        <dbReference type="EC" id="1.1.1.86"/>
    </reaction>
</comment>
<comment type="catalytic activity">
    <reaction evidence="1">
        <text>(2R,3R)-2,3-dihydroxy-3-methylpentanoate + NADP(+) = (S)-2-ethyl-2-hydroxy-3-oxobutanoate + NADPH + H(+)</text>
        <dbReference type="Rhea" id="RHEA:13493"/>
        <dbReference type="ChEBI" id="CHEBI:15378"/>
        <dbReference type="ChEBI" id="CHEBI:49256"/>
        <dbReference type="ChEBI" id="CHEBI:49258"/>
        <dbReference type="ChEBI" id="CHEBI:57783"/>
        <dbReference type="ChEBI" id="CHEBI:58349"/>
        <dbReference type="EC" id="1.1.1.86"/>
    </reaction>
</comment>
<comment type="cofactor">
    <cofactor evidence="1">
        <name>Mg(2+)</name>
        <dbReference type="ChEBI" id="CHEBI:18420"/>
    </cofactor>
    <text evidence="1">Binds 2 magnesium ions per subunit.</text>
</comment>
<comment type="pathway">
    <text evidence="1">Amino-acid biosynthesis; L-isoleucine biosynthesis; L-isoleucine from 2-oxobutanoate: step 2/4.</text>
</comment>
<comment type="pathway">
    <text evidence="1">Amino-acid biosynthesis; L-valine biosynthesis; L-valine from pyruvate: step 2/4.</text>
</comment>
<comment type="similarity">
    <text evidence="1">Belongs to the ketol-acid reductoisomerase family.</text>
</comment>
<proteinExistence type="inferred from homology"/>
<name>ILVC_SACI6</name>